<reference key="1">
    <citation type="journal article" date="2002" name="Biol. Reprod.">
        <title>Mammalian lipocalin-type prostaglandin D2 synthase in the fluids of the male genital tract: putative biochemical and physiological functions.</title>
        <authorList>
            <person name="Fouchecourt S."/>
            <person name="Charpigny G."/>
            <person name="Reinaud P."/>
            <person name="Dumont P."/>
            <person name="Dacheux J.-L."/>
        </authorList>
    </citation>
    <scope>NUCLEOTIDE SEQUENCE [MRNA]</scope>
</reference>
<reference key="2">
    <citation type="journal article" date="1999" name="Biol. Reprod.">
        <title>Glutathione-independent prostaglandin D2 synthase in ram and stallion epididymal fluids: origin and regulation.</title>
        <authorList>
            <person name="Fouchecourt S."/>
            <person name="Dacheux F."/>
            <person name="Dacheux J.-L."/>
        </authorList>
    </citation>
    <scope>PROTEIN SEQUENCE OF 108-122</scope>
    <scope>TISSUE SPECIFICITY</scope>
</reference>
<comment type="function">
    <text evidence="1 2 4">Catalyzes the conversion of PGH2 to PGD2, a prostaglandin involved in smooth muscle contraction/relaxation and a potent inhibitor of platelet aggregation. Involved in a variety of CNS functions, such as sedation, NREM sleep and PGE2-induced allodynia, and may have an anti-apoptotic role in oligodendrocytes. Binds small non-substrate lipophilic molecules, including biliverdin, bilirubin, retinal, retinoic acid and thyroid hormone, and may act as a scavenger for harmful hydrophobic molecules and as a secretory retinoid and thyroid hormone transporter. Possibly involved in development and maintenance of the blood-brain, blood-retina, blood-aqueous humor and blood-testis barrier. It is likely to play important roles in both maturation and maintenance of the central nervous system and male reproductive system (By similarity). Involved in PLA2G3-dependent maturation of mast cells. PLA2G3 is secreted by immature mast cells and acts on nearby fibroblasts upstream to PTDGS to synthesize PGD2, which in turn promotes mast cell maturation and degranulation via PTGDR (By similarity).</text>
</comment>
<comment type="catalytic activity">
    <reaction evidence="4">
        <text>prostaglandin H2 = prostaglandin D2</text>
        <dbReference type="Rhea" id="RHEA:10600"/>
        <dbReference type="ChEBI" id="CHEBI:57405"/>
        <dbReference type="ChEBI" id="CHEBI:57406"/>
        <dbReference type="EC" id="5.3.99.2"/>
    </reaction>
</comment>
<comment type="subunit">
    <text evidence="4">Monomer.</text>
</comment>
<comment type="subcellular location">
    <subcellularLocation>
        <location evidence="4">Rough endoplasmic reticulum</location>
    </subcellularLocation>
    <subcellularLocation>
        <location evidence="4">Nucleus membrane</location>
    </subcellularLocation>
    <subcellularLocation>
        <location evidence="4">Golgi apparatus</location>
    </subcellularLocation>
    <subcellularLocation>
        <location evidence="4">Cytoplasm</location>
        <location evidence="4">Perinuclear region</location>
    </subcellularLocation>
    <subcellularLocation>
        <location evidence="4">Secreted</location>
    </subcellularLocation>
    <text evidence="4">Detected on rough endoplasmic reticulum of arachnoid and menigioma cells. Localized to the nuclear envelope, Golgi apparatus, secretory vesicles and spherical cytoplasmic structures in arachnoid trabecular cells, and to circular cytoplasmic structures in meningeal macrophages and perivascular microglial cells. In oligodendrocytes, localized to the rough endoplasmic reticulum and nuclear envelope. In retinal pigment epithelial cells, localized to distinct cytoplasmic domains including the perinuclear region. Also secreted.</text>
</comment>
<comment type="tissue specificity">
    <text evidence="5">In the male reproductive system, it is expressed in the testis and epididymis, and is secreted into the seminal fluid.</text>
</comment>
<comment type="domain">
    <text evidence="4">Forms a beta-barrel structure that accommodates hydrophobic ligands in its interior.</text>
</comment>
<comment type="similarity">
    <text evidence="6">Belongs to the calycin superfamily. Lipocalin family.</text>
</comment>
<keyword id="KW-0963">Cytoplasm</keyword>
<keyword id="KW-0903">Direct protein sequencing</keyword>
<keyword id="KW-1015">Disulfide bond</keyword>
<keyword id="KW-0256">Endoplasmic reticulum</keyword>
<keyword id="KW-0275">Fatty acid biosynthesis</keyword>
<keyword id="KW-0276">Fatty acid metabolism</keyword>
<keyword id="KW-0325">Glycoprotein</keyword>
<keyword id="KW-0333">Golgi apparatus</keyword>
<keyword id="KW-0413">Isomerase</keyword>
<keyword id="KW-0444">Lipid biosynthesis</keyword>
<keyword id="KW-0443">Lipid metabolism</keyword>
<keyword id="KW-0467">Mast cell degranulation</keyword>
<keyword id="KW-0472">Membrane</keyword>
<keyword id="KW-0539">Nucleus</keyword>
<keyword id="KW-0643">Prostaglandin biosynthesis</keyword>
<keyword id="KW-0644">Prostaglandin metabolism</keyword>
<keyword id="KW-0873">Pyrrolidone carboxylic acid</keyword>
<keyword id="KW-1185">Reference proteome</keyword>
<keyword id="KW-0964">Secreted</keyword>
<keyword id="KW-0732">Signal</keyword>
<keyword id="KW-0813">Transport</keyword>
<dbReference type="EC" id="5.3.99.2" evidence="4"/>
<dbReference type="EMBL" id="AJ133469">
    <property type="protein sequence ID" value="CAB38173.1"/>
    <property type="molecule type" value="mRNA"/>
</dbReference>
<dbReference type="RefSeq" id="NP_001075337.1">
    <property type="nucleotide sequence ID" value="NM_001081868.1"/>
</dbReference>
<dbReference type="SMR" id="O97921"/>
<dbReference type="FunCoup" id="O97921">
    <property type="interactions" value="64"/>
</dbReference>
<dbReference type="STRING" id="9796.ENSECAP00000051564"/>
<dbReference type="GlyCosmos" id="O97921">
    <property type="glycosylation" value="2 sites, No reported glycans"/>
</dbReference>
<dbReference type="PaxDb" id="9796-ENSECAP00000051564"/>
<dbReference type="Ensembl" id="ENSECAT00000009444.4">
    <property type="protein sequence ID" value="ENSECAP00000007190.2"/>
    <property type="gene ID" value="ENSECAG00000009262.4"/>
</dbReference>
<dbReference type="Ensembl" id="ENSECAT00000071460.2">
    <property type="protein sequence ID" value="ENSECAP00000051564.2"/>
    <property type="gene ID" value="ENSECAG00000009262.4"/>
</dbReference>
<dbReference type="GeneID" id="100067921"/>
<dbReference type="KEGG" id="ecb:100067921"/>
<dbReference type="CTD" id="5730"/>
<dbReference type="GeneTree" id="ENSGT01050000244868"/>
<dbReference type="InParanoid" id="O97921"/>
<dbReference type="OrthoDB" id="9048943at2759"/>
<dbReference type="Proteomes" id="UP000002281">
    <property type="component" value="Chromosome 25"/>
</dbReference>
<dbReference type="Bgee" id="ENSECAG00000009262">
    <property type="expression patterns" value="Expressed in testis and 17 other cell types or tissues"/>
</dbReference>
<dbReference type="ExpressionAtlas" id="O97921">
    <property type="expression patterns" value="baseline"/>
</dbReference>
<dbReference type="GO" id="GO:0005576">
    <property type="term" value="C:extracellular region"/>
    <property type="evidence" value="ECO:0000314"/>
    <property type="project" value="UniProtKB"/>
</dbReference>
<dbReference type="GO" id="GO:0005615">
    <property type="term" value="C:extracellular space"/>
    <property type="evidence" value="ECO:0000250"/>
    <property type="project" value="UniProtKB"/>
</dbReference>
<dbReference type="GO" id="GO:0005794">
    <property type="term" value="C:Golgi apparatus"/>
    <property type="evidence" value="ECO:0000250"/>
    <property type="project" value="UniProtKB"/>
</dbReference>
<dbReference type="GO" id="GO:0031965">
    <property type="term" value="C:nuclear membrane"/>
    <property type="evidence" value="ECO:0007669"/>
    <property type="project" value="UniProtKB-SubCell"/>
</dbReference>
<dbReference type="GO" id="GO:0048471">
    <property type="term" value="C:perinuclear region of cytoplasm"/>
    <property type="evidence" value="ECO:0007669"/>
    <property type="project" value="UniProtKB-SubCell"/>
</dbReference>
<dbReference type="GO" id="GO:0005791">
    <property type="term" value="C:rough endoplasmic reticulum"/>
    <property type="evidence" value="ECO:0000250"/>
    <property type="project" value="UniProtKB"/>
</dbReference>
<dbReference type="GO" id="GO:0005504">
    <property type="term" value="F:fatty acid binding"/>
    <property type="evidence" value="ECO:0007669"/>
    <property type="project" value="Ensembl"/>
</dbReference>
<dbReference type="GO" id="GO:0004667">
    <property type="term" value="F:prostaglandin-D synthase activity"/>
    <property type="evidence" value="ECO:0000250"/>
    <property type="project" value="UniProtKB"/>
</dbReference>
<dbReference type="GO" id="GO:0005501">
    <property type="term" value="F:retinoid binding"/>
    <property type="evidence" value="ECO:0000250"/>
    <property type="project" value="UniProtKB"/>
</dbReference>
<dbReference type="GO" id="GO:0010467">
    <property type="term" value="P:gene expression"/>
    <property type="evidence" value="ECO:0007669"/>
    <property type="project" value="Ensembl"/>
</dbReference>
<dbReference type="GO" id="GO:0043303">
    <property type="term" value="P:mast cell degranulation"/>
    <property type="evidence" value="ECO:0007669"/>
    <property type="project" value="UniProtKB-KW"/>
</dbReference>
<dbReference type="GO" id="GO:2000255">
    <property type="term" value="P:negative regulation of male germ cell proliferation"/>
    <property type="evidence" value="ECO:0007669"/>
    <property type="project" value="Ensembl"/>
</dbReference>
<dbReference type="GO" id="GO:0001516">
    <property type="term" value="P:prostaglandin biosynthetic process"/>
    <property type="evidence" value="ECO:0000250"/>
    <property type="project" value="UniProtKB"/>
</dbReference>
<dbReference type="GO" id="GO:0045187">
    <property type="term" value="P:regulation of circadian sleep/wake cycle, sleep"/>
    <property type="evidence" value="ECO:0000250"/>
    <property type="project" value="UniProtKB"/>
</dbReference>
<dbReference type="FunFam" id="2.40.128.20:FF:000010">
    <property type="entry name" value="Prostaglandin-H2 D-isomerase"/>
    <property type="match status" value="1"/>
</dbReference>
<dbReference type="Gene3D" id="2.40.128.20">
    <property type="match status" value="1"/>
</dbReference>
<dbReference type="InterPro" id="IPR012674">
    <property type="entry name" value="Calycin"/>
</dbReference>
<dbReference type="InterPro" id="IPR002345">
    <property type="entry name" value="Lipocalin"/>
</dbReference>
<dbReference type="InterPro" id="IPR000566">
    <property type="entry name" value="Lipocln_cytosolic_FA-bd_dom"/>
</dbReference>
<dbReference type="PANTHER" id="PTHR11430">
    <property type="entry name" value="LIPOCALIN"/>
    <property type="match status" value="1"/>
</dbReference>
<dbReference type="PANTHER" id="PTHR11430:SF86">
    <property type="entry name" value="PROSTAGLANDIN-H2 D-ISOMERASE"/>
    <property type="match status" value="1"/>
</dbReference>
<dbReference type="Pfam" id="PF00061">
    <property type="entry name" value="Lipocalin"/>
    <property type="match status" value="1"/>
</dbReference>
<dbReference type="PRINTS" id="PR00179">
    <property type="entry name" value="LIPOCALIN"/>
</dbReference>
<dbReference type="PRINTS" id="PR01254">
    <property type="entry name" value="PGNDSYNTHASE"/>
</dbReference>
<dbReference type="SUPFAM" id="SSF50814">
    <property type="entry name" value="Lipocalins"/>
    <property type="match status" value="1"/>
</dbReference>
<name>PTGDS_HORSE</name>
<protein>
    <recommendedName>
        <fullName>Prostaglandin-H2 D-isomerase</fullName>
        <ecNumber evidence="4">5.3.99.2</ecNumber>
    </recommendedName>
    <alternativeName>
        <fullName>Glutathione-independent PGD synthase</fullName>
    </alternativeName>
    <alternativeName>
        <fullName>Lipocalin-type prostaglandin-D synthase</fullName>
    </alternativeName>
    <alternativeName>
        <fullName>Prostaglandin-D2 synthase</fullName>
        <shortName>PGD2 synthase</shortName>
        <shortName>PGDS</shortName>
        <shortName>PGDS2</shortName>
    </alternativeName>
</protein>
<evidence type="ECO:0000250" key="1"/>
<evidence type="ECO:0000250" key="2">
    <source>
        <dbReference type="UniProtKB" id="O09114"/>
    </source>
</evidence>
<evidence type="ECO:0000250" key="3">
    <source>
        <dbReference type="UniProtKB" id="P22057"/>
    </source>
</evidence>
<evidence type="ECO:0000250" key="4">
    <source>
        <dbReference type="UniProtKB" id="P41222"/>
    </source>
</evidence>
<evidence type="ECO:0000269" key="5">
    <source>
    </source>
</evidence>
<evidence type="ECO:0000305" key="6"/>
<gene>
    <name type="primary">PTGDS</name>
</gene>
<accession>O97921</accession>
<proteinExistence type="evidence at protein level"/>
<feature type="signal peptide" evidence="4">
    <location>
        <begin position="1"/>
        <end position="24"/>
    </location>
</feature>
<feature type="chain" id="PRO_0000017944" description="Prostaglandin-H2 D-isomerase">
    <location>
        <begin position="25"/>
        <end position="194"/>
    </location>
</feature>
<feature type="active site" description="Nucleophile" evidence="4">
    <location>
        <position position="65"/>
    </location>
</feature>
<feature type="modified residue" description="Pyrrolidone carboxylic acid" evidence="3">
    <location>
        <position position="25"/>
    </location>
</feature>
<feature type="glycosylation site" description="N-linked (GlcNAc...) asparagine" evidence="1">
    <location>
        <position position="51"/>
    </location>
</feature>
<feature type="glycosylation site" description="N-linked (GlcNAc...) asparagine" evidence="1">
    <location>
        <position position="78"/>
    </location>
</feature>
<feature type="disulfide bond" evidence="2">
    <location>
        <begin position="89"/>
        <end position="189"/>
    </location>
</feature>
<feature type="sequence conflict" description="In Ref. 2; AA sequence." evidence="6" ref="2">
    <original>VHEVSVV</original>
    <variation>PHEMSMM</variation>
    <location>
        <begin position="115"/>
        <end position="121"/>
    </location>
</feature>
<organism>
    <name type="scientific">Equus caballus</name>
    <name type="common">Horse</name>
    <dbReference type="NCBI Taxonomy" id="9796"/>
    <lineage>
        <taxon>Eukaryota</taxon>
        <taxon>Metazoa</taxon>
        <taxon>Chordata</taxon>
        <taxon>Craniata</taxon>
        <taxon>Vertebrata</taxon>
        <taxon>Euteleostomi</taxon>
        <taxon>Mammalia</taxon>
        <taxon>Eutheria</taxon>
        <taxon>Laurasiatheria</taxon>
        <taxon>Perissodactyla</taxon>
        <taxon>Equidae</taxon>
        <taxon>Equus</taxon>
    </lineage>
</organism>
<sequence length="194" mass="21669">MAASHTLWMGLVLLGVLGVLQTRAQAQPSLQPNFQQDKFLGRWFTSGLASNSSWFREKKKVLSMCTSVVAPTADGGFNLTSTFLRKDQCETRTLLLQPAGPPGCYSYTSPHWGMVHEVSVVETDYEEYALLYTHAESTKGLGGQDFRMATLYSRVQSPRPEVKEKFSTFAKAQGFTEDAIVFLPQTDKCMEEHN</sequence>